<comment type="function">
    <text evidence="2 3">Atypical kinase involved in the biosynthesis of coenzyme Q, also named ubiquinone, an essential lipid-soluble electron transporter for aerobic cellular respiration (By similarity). Its substrate specificity is still unclear: may act as a protein kinase that mediates phosphorylation of coq-3 (By similarity). According to other reports, acts as a small molecule kinase, possibly a lipid kinase that phosphorylates a prenyl lipid in the ubiquinone biosynthesis pathway, as suggested by its ability to bind coenzyme Q lipid intermediates (By similarity).</text>
</comment>
<comment type="pathway">
    <text evidence="2">Cofactor biosynthesis; ubiquinone biosynthesis.</text>
</comment>
<comment type="subcellular location">
    <subcellularLocation>
        <location evidence="2">Mitochondrion</location>
    </subcellularLocation>
</comment>
<comment type="similarity">
    <text evidence="5">Belongs to the protein kinase superfamily. ADCK protein kinase family.</text>
</comment>
<name>COQ8_CAEEL</name>
<keyword id="KW-0067">ATP-binding</keyword>
<keyword id="KW-0418">Kinase</keyword>
<keyword id="KW-0496">Mitochondrion</keyword>
<keyword id="KW-0547">Nucleotide-binding</keyword>
<keyword id="KW-1185">Reference proteome</keyword>
<keyword id="KW-0808">Transferase</keyword>
<keyword id="KW-0809">Transit peptide</keyword>
<keyword id="KW-0831">Ubiquinone biosynthesis</keyword>
<reference key="1">
    <citation type="journal article" date="1998" name="Science">
        <title>Genome sequence of the nematode C. elegans: a platform for investigating biology.</title>
        <authorList>
            <consortium name="The C. elegans sequencing consortium"/>
        </authorList>
    </citation>
    <scope>NUCLEOTIDE SEQUENCE [LARGE SCALE GENOMIC DNA]</scope>
    <source>
        <strain>Bristol N2</strain>
    </source>
</reference>
<organism>
    <name type="scientific">Caenorhabditis elegans</name>
    <dbReference type="NCBI Taxonomy" id="6239"/>
    <lineage>
        <taxon>Eukaryota</taxon>
        <taxon>Metazoa</taxon>
        <taxon>Ecdysozoa</taxon>
        <taxon>Nematoda</taxon>
        <taxon>Chromadorea</taxon>
        <taxon>Rhabditida</taxon>
        <taxon>Rhabditina</taxon>
        <taxon>Rhabditomorpha</taxon>
        <taxon>Rhabditoidea</taxon>
        <taxon>Rhabditidae</taxon>
        <taxon>Peloderinae</taxon>
        <taxon>Caenorhabditis</taxon>
    </lineage>
</organism>
<evidence type="ECO:0000250" key="1"/>
<evidence type="ECO:0000250" key="2">
    <source>
        <dbReference type="UniProtKB" id="Q8NI60"/>
    </source>
</evidence>
<evidence type="ECO:0000250" key="3">
    <source>
        <dbReference type="UniProtKB" id="Q96D53"/>
    </source>
</evidence>
<evidence type="ECO:0000256" key="4">
    <source>
        <dbReference type="SAM" id="MobiDB-lite"/>
    </source>
</evidence>
<evidence type="ECO:0000305" key="5"/>
<sequence>MAAKRPPASTLKWCQQEMGPICEGIGMVVRSQIGYDGRRIEKQIRRKALQTVVMGGQDVDPLKEPNKTNAPLLSPTLPSTNEALQRARVVAAGIETFAKLMSQGTYPGSAGFTVSETGERKYMKQTSPVQSNIVANLMATADKLSKGVISLAPFPLPTITKLGTWVIANPTAQLPIPPQLKSAIPAIGQIETLIQSILGVQGPVSSVSRAPRKLKLEGVTDQVVLEPETIHATVDVEPIDKTLTKEEAEFLIKAARSVDDDNAETAIFGTQKAKPKVYRPELPKNFEVNLEMGNVHTLTRSNESSVPATRIGRLATFGQLAFGLLGGATAEVTRRTFGIGKRLQEEGIPKNPFLSEANADRIVATLCRVRGAALKLGQMLSIQDSSTVPPALLQIFERVRQSADFMPIKQVHRQMKDAFGDDWREKFEHFDDKPFACASIGQVHKAVLKDGRNVAVKVQYPGVAEGIDSDIDNLVSVLSVGGIFPKGMFLDAFVGVARRELKQECDYEREARAMKKFRELIADWQDVYVPEVIDELSSSRVLTTELVYGKPVDACVEEPQVVRDYIAGKFIELCLKEIFLWRFMQTDPNWSNFFLGKHPKTGEPRLVLLDFGASRAYGKKFVDIYMNIIKSAYDGDKKKIIEYSREIGFLTGYETSVMEDAHVESVMIMGETLASNHPYNFANQDVTMRIQKLIPVMLEHRLTSPPEEIYSLHRKLSGCYLLAAKLKATVSCGGLFHEIHENYVFGEDGIDINID</sequence>
<protein>
    <recommendedName>
        <fullName evidence="2">Atypical kinase coq-8, mitochondrial</fullName>
        <ecNumber evidence="2">2.7.-.-</ecNumber>
    </recommendedName>
</protein>
<accession>Q18486</accession>
<dbReference type="EC" id="2.7.-.-" evidence="2"/>
<dbReference type="EMBL" id="FO080789">
    <property type="protein sequence ID" value="CCD66776.1"/>
    <property type="molecule type" value="Genomic_DNA"/>
</dbReference>
<dbReference type="PIR" id="S72572">
    <property type="entry name" value="S72572"/>
</dbReference>
<dbReference type="RefSeq" id="NP_498014.2">
    <property type="nucleotide sequence ID" value="NM_065613.7"/>
</dbReference>
<dbReference type="SMR" id="Q18486"/>
<dbReference type="BioGRID" id="40881">
    <property type="interactions" value="5"/>
</dbReference>
<dbReference type="FunCoup" id="Q18486">
    <property type="interactions" value="1594"/>
</dbReference>
<dbReference type="STRING" id="6239.C35D10.4.1"/>
<dbReference type="PaxDb" id="6239-C35D10.4"/>
<dbReference type="PeptideAtlas" id="Q18486"/>
<dbReference type="EnsemblMetazoa" id="C35D10.4.1">
    <property type="protein sequence ID" value="C35D10.4.1"/>
    <property type="gene ID" value="WBGene00000767"/>
</dbReference>
<dbReference type="GeneID" id="175647"/>
<dbReference type="KEGG" id="cel:CELE_C35D10.4"/>
<dbReference type="UCSC" id="C35D10.4">
    <property type="organism name" value="c. elegans"/>
</dbReference>
<dbReference type="AGR" id="WB:WBGene00000767"/>
<dbReference type="CTD" id="175647"/>
<dbReference type="WormBase" id="C35D10.4">
    <property type="protein sequence ID" value="CE32159"/>
    <property type="gene ID" value="WBGene00000767"/>
    <property type="gene designation" value="coq-8"/>
</dbReference>
<dbReference type="eggNOG" id="KOG1234">
    <property type="taxonomic scope" value="Eukaryota"/>
</dbReference>
<dbReference type="GeneTree" id="ENSGT00940000169293"/>
<dbReference type="HOGENOM" id="CLU_006533_9_1_1"/>
<dbReference type="InParanoid" id="Q18486"/>
<dbReference type="OMA" id="KQVHRQM"/>
<dbReference type="OrthoDB" id="201153at2759"/>
<dbReference type="PhylomeDB" id="Q18486"/>
<dbReference type="Reactome" id="R-CEL-2142789">
    <property type="pathway name" value="Ubiquinol biosynthesis"/>
</dbReference>
<dbReference type="UniPathway" id="UPA00232"/>
<dbReference type="PRO" id="PR:Q18486"/>
<dbReference type="Proteomes" id="UP000001940">
    <property type="component" value="Chromosome III"/>
</dbReference>
<dbReference type="Bgee" id="WBGene00000767">
    <property type="expression patterns" value="Expressed in germ line (C elegans) and 4 other cell types or tissues"/>
</dbReference>
<dbReference type="GO" id="GO:0005739">
    <property type="term" value="C:mitochondrion"/>
    <property type="evidence" value="ECO:0007669"/>
    <property type="project" value="UniProtKB-SubCell"/>
</dbReference>
<dbReference type="GO" id="GO:0005524">
    <property type="term" value="F:ATP binding"/>
    <property type="evidence" value="ECO:0007669"/>
    <property type="project" value="UniProtKB-KW"/>
</dbReference>
<dbReference type="GO" id="GO:0016740">
    <property type="term" value="F:transferase activity"/>
    <property type="evidence" value="ECO:0007669"/>
    <property type="project" value="UniProtKB-KW"/>
</dbReference>
<dbReference type="GO" id="GO:0006744">
    <property type="term" value="P:ubiquinone biosynthetic process"/>
    <property type="evidence" value="ECO:0000315"/>
    <property type="project" value="WormBase"/>
</dbReference>
<dbReference type="CDD" id="cd13970">
    <property type="entry name" value="ABC1_ADCK3"/>
    <property type="match status" value="1"/>
</dbReference>
<dbReference type="InterPro" id="IPR004147">
    <property type="entry name" value="ABC1_dom"/>
</dbReference>
<dbReference type="InterPro" id="IPR034646">
    <property type="entry name" value="ADCK3_dom"/>
</dbReference>
<dbReference type="InterPro" id="IPR051409">
    <property type="entry name" value="Atypical_kinase_ADCK"/>
</dbReference>
<dbReference type="InterPro" id="IPR011009">
    <property type="entry name" value="Kinase-like_dom_sf"/>
</dbReference>
<dbReference type="PANTHER" id="PTHR43851">
    <property type="match status" value="1"/>
</dbReference>
<dbReference type="PANTHER" id="PTHR43851:SF3">
    <property type="entry name" value="COENZYME Q8"/>
    <property type="match status" value="1"/>
</dbReference>
<dbReference type="Pfam" id="PF03109">
    <property type="entry name" value="ABC1"/>
    <property type="match status" value="1"/>
</dbReference>
<dbReference type="SUPFAM" id="SSF56112">
    <property type="entry name" value="Protein kinase-like (PK-like)"/>
    <property type="match status" value="1"/>
</dbReference>
<gene>
    <name type="primary">coq-8</name>
    <name type="ORF">C35D10.4</name>
</gene>
<feature type="transit peptide" description="Mitochondrion" evidence="5">
    <location>
        <begin position="1"/>
        <end status="unknown"/>
    </location>
</feature>
<feature type="chain" id="PRO_0000200698" description="Atypical kinase coq-8, mitochondrial">
    <location>
        <begin status="unknown"/>
        <end position="755"/>
    </location>
</feature>
<feature type="region of interest" description="Disordered" evidence="4">
    <location>
        <begin position="57"/>
        <end position="78"/>
    </location>
</feature>
<feature type="compositionally biased region" description="Polar residues" evidence="4">
    <location>
        <begin position="67"/>
        <end position="78"/>
    </location>
</feature>
<feature type="active site" description="Proton acceptor" evidence="1">
    <location>
        <position position="587"/>
    </location>
</feature>
<feature type="binding site" evidence="1">
    <location>
        <begin position="435"/>
        <end position="443"/>
    </location>
    <ligand>
        <name>ATP</name>
        <dbReference type="ChEBI" id="CHEBI:30616"/>
    </ligand>
</feature>
<feature type="binding site" evidence="1">
    <location>
        <position position="457"/>
    </location>
    <ligand>
        <name>ATP</name>
        <dbReference type="ChEBI" id="CHEBI:30616"/>
    </ligand>
</feature>
<proteinExistence type="inferred from homology"/>